<protein>
    <recommendedName>
        <fullName evidence="1">Na(+)-translocating NADH-quinone reductase subunit D</fullName>
        <shortName evidence="1">Na(+)-NQR subunit D</shortName>
        <shortName evidence="1">Na(+)-translocating NQR subunit D</shortName>
        <ecNumber evidence="1">7.2.1.1</ecNumber>
    </recommendedName>
    <alternativeName>
        <fullName evidence="1">NQR complex subunit D</fullName>
    </alternativeName>
    <alternativeName>
        <fullName evidence="1">NQR-1 subunit D</fullName>
    </alternativeName>
</protein>
<evidence type="ECO:0000255" key="1">
    <source>
        <dbReference type="HAMAP-Rule" id="MF_00428"/>
    </source>
</evidence>
<organism>
    <name type="scientific">Serratia proteamaculans (strain 568)</name>
    <dbReference type="NCBI Taxonomy" id="399741"/>
    <lineage>
        <taxon>Bacteria</taxon>
        <taxon>Pseudomonadati</taxon>
        <taxon>Pseudomonadota</taxon>
        <taxon>Gammaproteobacteria</taxon>
        <taxon>Enterobacterales</taxon>
        <taxon>Yersiniaceae</taxon>
        <taxon>Serratia</taxon>
    </lineage>
</organism>
<keyword id="KW-0997">Cell inner membrane</keyword>
<keyword id="KW-1003">Cell membrane</keyword>
<keyword id="KW-0406">Ion transport</keyword>
<keyword id="KW-0472">Membrane</keyword>
<keyword id="KW-0520">NAD</keyword>
<keyword id="KW-0915">Sodium</keyword>
<keyword id="KW-0739">Sodium transport</keyword>
<keyword id="KW-1278">Translocase</keyword>
<keyword id="KW-0812">Transmembrane</keyword>
<keyword id="KW-1133">Transmembrane helix</keyword>
<keyword id="KW-0813">Transport</keyword>
<keyword id="KW-0830">Ubiquinone</keyword>
<comment type="function">
    <text evidence="1">NQR complex catalyzes the reduction of ubiquinone-1 to ubiquinol by two successive reactions, coupled with the transport of Na(+) ions from the cytoplasm to the periplasm. NqrA to NqrE are probably involved in the second step, the conversion of ubisemiquinone to ubiquinol.</text>
</comment>
<comment type="catalytic activity">
    <reaction evidence="1">
        <text>a ubiquinone + n Na(+)(in) + NADH + H(+) = a ubiquinol + n Na(+)(out) + NAD(+)</text>
        <dbReference type="Rhea" id="RHEA:47748"/>
        <dbReference type="Rhea" id="RHEA-COMP:9565"/>
        <dbReference type="Rhea" id="RHEA-COMP:9566"/>
        <dbReference type="ChEBI" id="CHEBI:15378"/>
        <dbReference type="ChEBI" id="CHEBI:16389"/>
        <dbReference type="ChEBI" id="CHEBI:17976"/>
        <dbReference type="ChEBI" id="CHEBI:29101"/>
        <dbReference type="ChEBI" id="CHEBI:57540"/>
        <dbReference type="ChEBI" id="CHEBI:57945"/>
        <dbReference type="EC" id="7.2.1.1"/>
    </reaction>
</comment>
<comment type="subunit">
    <text evidence="1">Composed of six subunits; NqrA, NqrB, NqrC, NqrD, NqrE and NqrF.</text>
</comment>
<comment type="subcellular location">
    <subcellularLocation>
        <location evidence="1">Cell inner membrane</location>
        <topology evidence="1">Multi-pass membrane protein</topology>
    </subcellularLocation>
</comment>
<comment type="similarity">
    <text evidence="1">Belongs to the NqrDE/RnfAE family.</text>
</comment>
<feature type="chain" id="PRO_1000060164" description="Na(+)-translocating NADH-quinone reductase subunit D">
    <location>
        <begin position="1"/>
        <end position="209"/>
    </location>
</feature>
<feature type="transmembrane region" description="Helical" evidence="1">
    <location>
        <begin position="42"/>
        <end position="62"/>
    </location>
</feature>
<feature type="transmembrane region" description="Helical" evidence="1">
    <location>
        <begin position="66"/>
        <end position="86"/>
    </location>
</feature>
<feature type="transmembrane region" description="Helical" evidence="1">
    <location>
        <begin position="95"/>
        <end position="115"/>
    </location>
</feature>
<feature type="transmembrane region" description="Helical" evidence="1">
    <location>
        <begin position="131"/>
        <end position="151"/>
    </location>
</feature>
<feature type="transmembrane region" description="Helical" evidence="1">
    <location>
        <begin position="178"/>
        <end position="198"/>
    </location>
</feature>
<proteinExistence type="inferred from homology"/>
<dbReference type="EC" id="7.2.1.1" evidence="1"/>
<dbReference type="EMBL" id="CP000826">
    <property type="protein sequence ID" value="ABV40062.1"/>
    <property type="molecule type" value="Genomic_DNA"/>
</dbReference>
<dbReference type="SMR" id="A8GAC2"/>
<dbReference type="STRING" id="399741.Spro_0956"/>
<dbReference type="KEGG" id="spe:Spro_0956"/>
<dbReference type="eggNOG" id="COG1347">
    <property type="taxonomic scope" value="Bacteria"/>
</dbReference>
<dbReference type="HOGENOM" id="CLU_046659_1_1_6"/>
<dbReference type="OrthoDB" id="9782945at2"/>
<dbReference type="GO" id="GO:0005886">
    <property type="term" value="C:plasma membrane"/>
    <property type="evidence" value="ECO:0007669"/>
    <property type="project" value="UniProtKB-SubCell"/>
</dbReference>
<dbReference type="GO" id="GO:0016655">
    <property type="term" value="F:oxidoreductase activity, acting on NAD(P)H, quinone or similar compound as acceptor"/>
    <property type="evidence" value="ECO:0007669"/>
    <property type="project" value="UniProtKB-UniRule"/>
</dbReference>
<dbReference type="GO" id="GO:0006814">
    <property type="term" value="P:sodium ion transport"/>
    <property type="evidence" value="ECO:0007669"/>
    <property type="project" value="UniProtKB-UniRule"/>
</dbReference>
<dbReference type="HAMAP" id="MF_00428">
    <property type="entry name" value="NqrD"/>
    <property type="match status" value="1"/>
</dbReference>
<dbReference type="InterPro" id="IPR011292">
    <property type="entry name" value="NqrD"/>
</dbReference>
<dbReference type="InterPro" id="IPR003667">
    <property type="entry name" value="NqrDE/RnfAE"/>
</dbReference>
<dbReference type="NCBIfam" id="TIGR01939">
    <property type="entry name" value="nqrD"/>
    <property type="match status" value="1"/>
</dbReference>
<dbReference type="NCBIfam" id="NF006777">
    <property type="entry name" value="PRK09292.1"/>
    <property type="match status" value="1"/>
</dbReference>
<dbReference type="NCBIfam" id="NF009070">
    <property type="entry name" value="PRK12405.1"/>
    <property type="match status" value="1"/>
</dbReference>
<dbReference type="PANTHER" id="PTHR30586">
    <property type="entry name" value="ELECTRON TRANSPORT COMPLEX PROTEIN RNFE"/>
    <property type="match status" value="1"/>
</dbReference>
<dbReference type="PANTHER" id="PTHR30586:SF1">
    <property type="entry name" value="NA(+)-TRANSLOCATING NADH-QUINONE REDUCTASE SUBUNIT D"/>
    <property type="match status" value="1"/>
</dbReference>
<dbReference type="Pfam" id="PF02508">
    <property type="entry name" value="Rnf-Nqr"/>
    <property type="match status" value="1"/>
</dbReference>
<dbReference type="PIRSF" id="PIRSF006102">
    <property type="entry name" value="NQR_DE"/>
    <property type="match status" value="1"/>
</dbReference>
<accession>A8GAC2</accession>
<sequence length="209" mass="22665">MADSKEIKRVLLGPLFDNNPIALQVLGVCSALAVTTKLETAVVMTIAVTLVTAFSSFFISLIRHHIPNSVRIIVQMAIIASLVIVVDQLLRAYAFEISKQLSVFVGLIITNCIVMGRAEAYAMKSPPIESFMDGIGNGLGYGVILVLVGFLRELFGSGKLFGIPVLETVQNGGWYQPNGLFLLAPSAFFIIGLLIWALRSLKPAQIEKE</sequence>
<name>NQRD_SERP5</name>
<reference key="1">
    <citation type="submission" date="2007-09" db="EMBL/GenBank/DDBJ databases">
        <title>Complete sequence of chromosome of Serratia proteamaculans 568.</title>
        <authorList>
            <consortium name="US DOE Joint Genome Institute"/>
            <person name="Copeland A."/>
            <person name="Lucas S."/>
            <person name="Lapidus A."/>
            <person name="Barry K."/>
            <person name="Glavina del Rio T."/>
            <person name="Dalin E."/>
            <person name="Tice H."/>
            <person name="Pitluck S."/>
            <person name="Chain P."/>
            <person name="Malfatti S."/>
            <person name="Shin M."/>
            <person name="Vergez L."/>
            <person name="Schmutz J."/>
            <person name="Larimer F."/>
            <person name="Land M."/>
            <person name="Hauser L."/>
            <person name="Kyrpides N."/>
            <person name="Kim E."/>
            <person name="Taghavi S."/>
            <person name="Newman L."/>
            <person name="Vangronsveld J."/>
            <person name="van der Lelie D."/>
            <person name="Richardson P."/>
        </authorList>
    </citation>
    <scope>NUCLEOTIDE SEQUENCE [LARGE SCALE GENOMIC DNA]</scope>
    <source>
        <strain>568</strain>
    </source>
</reference>
<gene>
    <name evidence="1" type="primary">nqrD</name>
    <name type="ordered locus">Spro_0956</name>
</gene>